<name>SRSF7_DROME</name>
<reference evidence="15" key="1">
    <citation type="journal article" date="2000" name="Mech. Dev.">
        <title>Localized expression of the Drosophila gene Dxl6, a novel member of the serine/arginine rich (SR) family of splicing factors.</title>
        <authorList>
            <person name="Vorbruggen G."/>
            <person name="Onel S."/>
            <person name="Jackle H."/>
        </authorList>
    </citation>
    <scope>NUCLEOTIDE SEQUENCE [MRNA]</scope>
    <scope>DEVELOPMENTAL STAGE</scope>
</reference>
<reference evidence="17" key="2">
    <citation type="journal article" date="2000" name="Science">
        <title>The genome sequence of Drosophila melanogaster.</title>
        <authorList>
            <person name="Adams M.D."/>
            <person name="Celniker S.E."/>
            <person name="Holt R.A."/>
            <person name="Evans C.A."/>
            <person name="Gocayne J.D."/>
            <person name="Amanatides P.G."/>
            <person name="Scherer S.E."/>
            <person name="Li P.W."/>
            <person name="Hoskins R.A."/>
            <person name="Galle R.F."/>
            <person name="George R.A."/>
            <person name="Lewis S.E."/>
            <person name="Richards S."/>
            <person name="Ashburner M."/>
            <person name="Henderson S.N."/>
            <person name="Sutton G.G."/>
            <person name="Wortman J.R."/>
            <person name="Yandell M.D."/>
            <person name="Zhang Q."/>
            <person name="Chen L.X."/>
            <person name="Brandon R.C."/>
            <person name="Rogers Y.-H.C."/>
            <person name="Blazej R.G."/>
            <person name="Champe M."/>
            <person name="Pfeiffer B.D."/>
            <person name="Wan K.H."/>
            <person name="Doyle C."/>
            <person name="Baxter E.G."/>
            <person name="Helt G."/>
            <person name="Nelson C.R."/>
            <person name="Miklos G.L.G."/>
            <person name="Abril J.F."/>
            <person name="Agbayani A."/>
            <person name="An H.-J."/>
            <person name="Andrews-Pfannkoch C."/>
            <person name="Baldwin D."/>
            <person name="Ballew R.M."/>
            <person name="Basu A."/>
            <person name="Baxendale J."/>
            <person name="Bayraktaroglu L."/>
            <person name="Beasley E.M."/>
            <person name="Beeson K.Y."/>
            <person name="Benos P.V."/>
            <person name="Berman B.P."/>
            <person name="Bhandari D."/>
            <person name="Bolshakov S."/>
            <person name="Borkova D."/>
            <person name="Botchan M.R."/>
            <person name="Bouck J."/>
            <person name="Brokstein P."/>
            <person name="Brottier P."/>
            <person name="Burtis K.C."/>
            <person name="Busam D.A."/>
            <person name="Butler H."/>
            <person name="Cadieu E."/>
            <person name="Center A."/>
            <person name="Chandra I."/>
            <person name="Cherry J.M."/>
            <person name="Cawley S."/>
            <person name="Dahlke C."/>
            <person name="Davenport L.B."/>
            <person name="Davies P."/>
            <person name="de Pablos B."/>
            <person name="Delcher A."/>
            <person name="Deng Z."/>
            <person name="Mays A.D."/>
            <person name="Dew I."/>
            <person name="Dietz S.M."/>
            <person name="Dodson K."/>
            <person name="Doup L.E."/>
            <person name="Downes M."/>
            <person name="Dugan-Rocha S."/>
            <person name="Dunkov B.C."/>
            <person name="Dunn P."/>
            <person name="Durbin K.J."/>
            <person name="Evangelista C.C."/>
            <person name="Ferraz C."/>
            <person name="Ferriera S."/>
            <person name="Fleischmann W."/>
            <person name="Fosler C."/>
            <person name="Gabrielian A.E."/>
            <person name="Garg N.S."/>
            <person name="Gelbart W.M."/>
            <person name="Glasser K."/>
            <person name="Glodek A."/>
            <person name="Gong F."/>
            <person name="Gorrell J.H."/>
            <person name="Gu Z."/>
            <person name="Guan P."/>
            <person name="Harris M."/>
            <person name="Harris N.L."/>
            <person name="Harvey D.A."/>
            <person name="Heiman T.J."/>
            <person name="Hernandez J.R."/>
            <person name="Houck J."/>
            <person name="Hostin D."/>
            <person name="Houston K.A."/>
            <person name="Howland T.J."/>
            <person name="Wei M.-H."/>
            <person name="Ibegwam C."/>
            <person name="Jalali M."/>
            <person name="Kalush F."/>
            <person name="Karpen G.H."/>
            <person name="Ke Z."/>
            <person name="Kennison J.A."/>
            <person name="Ketchum K.A."/>
            <person name="Kimmel B.E."/>
            <person name="Kodira C.D."/>
            <person name="Kraft C.L."/>
            <person name="Kravitz S."/>
            <person name="Kulp D."/>
            <person name="Lai Z."/>
            <person name="Lasko P."/>
            <person name="Lei Y."/>
            <person name="Levitsky A.A."/>
            <person name="Li J.H."/>
            <person name="Li Z."/>
            <person name="Liang Y."/>
            <person name="Lin X."/>
            <person name="Liu X."/>
            <person name="Mattei B."/>
            <person name="McIntosh T.C."/>
            <person name="McLeod M.P."/>
            <person name="McPherson D."/>
            <person name="Merkulov G."/>
            <person name="Milshina N.V."/>
            <person name="Mobarry C."/>
            <person name="Morris J."/>
            <person name="Moshrefi A."/>
            <person name="Mount S.M."/>
            <person name="Moy M."/>
            <person name="Murphy B."/>
            <person name="Murphy L."/>
            <person name="Muzny D.M."/>
            <person name="Nelson D.L."/>
            <person name="Nelson D.R."/>
            <person name="Nelson K.A."/>
            <person name="Nixon K."/>
            <person name="Nusskern D.R."/>
            <person name="Pacleb J.M."/>
            <person name="Palazzolo M."/>
            <person name="Pittman G.S."/>
            <person name="Pan S."/>
            <person name="Pollard J."/>
            <person name="Puri V."/>
            <person name="Reese M.G."/>
            <person name="Reinert K."/>
            <person name="Remington K."/>
            <person name="Saunders R.D.C."/>
            <person name="Scheeler F."/>
            <person name="Shen H."/>
            <person name="Shue B.C."/>
            <person name="Siden-Kiamos I."/>
            <person name="Simpson M."/>
            <person name="Skupski M.P."/>
            <person name="Smith T.J."/>
            <person name="Spier E."/>
            <person name="Spradling A.C."/>
            <person name="Stapleton M."/>
            <person name="Strong R."/>
            <person name="Sun E."/>
            <person name="Svirskas R."/>
            <person name="Tector C."/>
            <person name="Turner R."/>
            <person name="Venter E."/>
            <person name="Wang A.H."/>
            <person name="Wang X."/>
            <person name="Wang Z.-Y."/>
            <person name="Wassarman D.A."/>
            <person name="Weinstock G.M."/>
            <person name="Weissenbach J."/>
            <person name="Williams S.M."/>
            <person name="Woodage T."/>
            <person name="Worley K.C."/>
            <person name="Wu D."/>
            <person name="Yang S."/>
            <person name="Yao Q.A."/>
            <person name="Ye J."/>
            <person name="Yeh R.-F."/>
            <person name="Zaveri J.S."/>
            <person name="Zhan M."/>
            <person name="Zhang G."/>
            <person name="Zhao Q."/>
            <person name="Zheng L."/>
            <person name="Zheng X.H."/>
            <person name="Zhong F.N."/>
            <person name="Zhong W."/>
            <person name="Zhou X."/>
            <person name="Zhu S.C."/>
            <person name="Zhu X."/>
            <person name="Smith H.O."/>
            <person name="Gibbs R.A."/>
            <person name="Myers E.W."/>
            <person name="Rubin G.M."/>
            <person name="Venter J.C."/>
        </authorList>
    </citation>
    <scope>NUCLEOTIDE SEQUENCE [LARGE SCALE GENOMIC DNA]</scope>
    <source>
        <strain evidence="17">Berkeley</strain>
    </source>
</reference>
<reference evidence="13" key="3">
    <citation type="journal article" date="2001" name="Mol. Cell. Biol.">
        <title>Distinctive features of Drosophila alternative splicing factor RS domain: implication for specific phosphorylation, shuttling, and splicing activation.</title>
        <authorList>
            <person name="Allemand E."/>
            <person name="Gattoni R."/>
            <person name="Bourbon H.M."/>
            <person name="Stevenin J."/>
            <person name="Caceres J.F."/>
            <person name="Soret J."/>
            <person name="Tazi J."/>
        </authorList>
    </citation>
    <scope>NUCLEOTIDE SEQUENCE [MRNA]</scope>
</reference>
<reference evidence="17" key="4">
    <citation type="journal article" date="2002" name="Genome Biol.">
        <title>Annotation of the Drosophila melanogaster euchromatic genome: a systematic review.</title>
        <authorList>
            <person name="Misra S."/>
            <person name="Crosby M.A."/>
            <person name="Mungall C.J."/>
            <person name="Matthews B.B."/>
            <person name="Campbell K.S."/>
            <person name="Hradecky P."/>
            <person name="Huang Y."/>
            <person name="Kaminker J.S."/>
            <person name="Millburn G.H."/>
            <person name="Prochnik S.E."/>
            <person name="Smith C.D."/>
            <person name="Tupy J.L."/>
            <person name="Whitfield E.J."/>
            <person name="Bayraktaroglu L."/>
            <person name="Berman B.P."/>
            <person name="Bettencourt B.R."/>
            <person name="Celniker S.E."/>
            <person name="de Grey A.D.N.J."/>
            <person name="Drysdale R.A."/>
            <person name="Harris N.L."/>
            <person name="Richter J."/>
            <person name="Russo S."/>
            <person name="Schroeder A.J."/>
            <person name="Shu S.Q."/>
            <person name="Stapleton M."/>
            <person name="Yamada C."/>
            <person name="Ashburner M."/>
            <person name="Gelbart W.M."/>
            <person name="Rubin G.M."/>
            <person name="Lewis S.E."/>
        </authorList>
    </citation>
    <scope>GENOME REANNOTATION</scope>
    <source>
        <strain evidence="17">Berkeley</strain>
    </source>
</reference>
<reference evidence="14" key="5">
    <citation type="journal article" date="2002" name="Genome Biol.">
        <title>A Drosophila full-length cDNA resource.</title>
        <authorList>
            <person name="Stapleton M."/>
            <person name="Carlson J.W."/>
            <person name="Brokstein P."/>
            <person name="Yu C."/>
            <person name="Champe M."/>
            <person name="George R.A."/>
            <person name="Guarin H."/>
            <person name="Kronmiller B."/>
            <person name="Pacleb J.M."/>
            <person name="Park S."/>
            <person name="Wan K.H."/>
            <person name="Rubin G.M."/>
            <person name="Celniker S.E."/>
        </authorList>
    </citation>
    <scope>NUCLEOTIDE SEQUENCE [LARGE SCALE MRNA]</scope>
    <source>
        <strain evidence="14">Berkeley</strain>
        <tissue evidence="14">Embryo</tissue>
    </source>
</reference>
<reference evidence="12" key="6">
    <citation type="journal article" date="2007" name="Mol. Cell. Biochem.">
        <title>Identification of RNA binding sequences of Drosophila SR protein DX16.</title>
        <authorList>
            <person name="Yuan L."/>
            <person name="Zhou J."/>
            <person name="Wan Y."/>
            <person name="Sun M."/>
            <person name="Ding J."/>
            <person name="Dou F."/>
            <person name="Xie W."/>
        </authorList>
    </citation>
    <scope>FUNCTION</scope>
    <scope>SUBCELLULAR LOCATION</scope>
    <scope>DEVELOPMENTAL STAGE</scope>
</reference>
<reference evidence="12" key="7">
    <citation type="journal article" date="2008" name="Mol. Cell. Biochem.">
        <title>DX16 is a novel SR protein phosphorylated by DOA.</title>
        <authorList>
            <person name="Wan Y."/>
            <person name="Sun M."/>
            <person name="Wang S."/>
            <person name="Liu L."/>
            <person name="Yuan L."/>
            <person name="Xie W."/>
        </authorList>
    </citation>
    <scope>INTERACTION WITH ALSIN2; RBP1 AND DOA</scope>
    <scope>SUBCELLULAR LOCATION</scope>
    <scope>DEVELOPMENTAL STAGE</scope>
    <scope>PHOSPHORYLATION</scope>
</reference>
<reference evidence="12" key="8">
    <citation type="journal article" date="2022" name="Biochem. Biophys. Res. Commun.">
        <title>The splicing factor 9G8 regulates the expression of NADPH-producing enzyme genes in Drosophila.</title>
        <authorList>
            <person name="Weidman T."/>
            <person name="Nagengast A.A."/>
            <person name="DiAngelo J.R."/>
        </authorList>
    </citation>
    <scope>FUNCTION</scope>
    <scope>DISRUPTION PHENOTYPE</scope>
</reference>
<protein>
    <recommendedName>
        <fullName evidence="12">Serine/arginine-rich splicing factor x16</fullName>
    </recommendedName>
    <alternativeName>
        <fullName evidence="12">SR family splicing factor 9G8</fullName>
    </alternativeName>
</protein>
<accession>Q9V3V0</accession>
<accession>M9PC85</accession>
<organism evidence="17">
    <name type="scientific">Drosophila melanogaster</name>
    <name type="common">Fruit fly</name>
    <dbReference type="NCBI Taxonomy" id="7227"/>
    <lineage>
        <taxon>Eukaryota</taxon>
        <taxon>Metazoa</taxon>
        <taxon>Ecdysozoa</taxon>
        <taxon>Arthropoda</taxon>
        <taxon>Hexapoda</taxon>
        <taxon>Insecta</taxon>
        <taxon>Pterygota</taxon>
        <taxon>Neoptera</taxon>
        <taxon>Endopterygota</taxon>
        <taxon>Diptera</taxon>
        <taxon>Brachycera</taxon>
        <taxon>Muscomorpha</taxon>
        <taxon>Ephydroidea</taxon>
        <taxon>Drosophilidae</taxon>
        <taxon>Drosophila</taxon>
        <taxon>Sophophora</taxon>
    </lineage>
</organism>
<evidence type="ECO:0000255" key="1">
    <source>
        <dbReference type="PROSITE-ProRule" id="PRU00047"/>
    </source>
</evidence>
<evidence type="ECO:0000255" key="2">
    <source>
        <dbReference type="PROSITE-ProRule" id="PRU00176"/>
    </source>
</evidence>
<evidence type="ECO:0000256" key="3">
    <source>
        <dbReference type="SAM" id="MobiDB-lite"/>
    </source>
</evidence>
<evidence type="ECO:0000269" key="4">
    <source>
    </source>
</evidence>
<evidence type="ECO:0000269" key="5">
    <source>
    </source>
</evidence>
<evidence type="ECO:0000269" key="6">
    <source>
    </source>
</evidence>
<evidence type="ECO:0000269" key="7">
    <source>
    </source>
</evidence>
<evidence type="ECO:0000303" key="8">
    <source>
    </source>
</evidence>
<evidence type="ECO:0000303" key="9">
    <source>
    </source>
</evidence>
<evidence type="ECO:0000303" key="10">
    <source>
    </source>
</evidence>
<evidence type="ECO:0000303" key="11">
    <source>
    </source>
</evidence>
<evidence type="ECO:0000305" key="12"/>
<evidence type="ECO:0000312" key="13">
    <source>
        <dbReference type="EMBL" id="AAF43414.1"/>
    </source>
</evidence>
<evidence type="ECO:0000312" key="14">
    <source>
        <dbReference type="EMBL" id="AAM11385.1"/>
    </source>
</evidence>
<evidence type="ECO:0000312" key="15">
    <source>
        <dbReference type="EMBL" id="CAB60724.1"/>
    </source>
</evidence>
<evidence type="ECO:0000312" key="16">
    <source>
        <dbReference type="FlyBase" id="FBgn0028554"/>
    </source>
</evidence>
<evidence type="ECO:0000312" key="17">
    <source>
        <dbReference type="Proteomes" id="UP000000803"/>
    </source>
</evidence>
<feature type="chain" id="PRO_0000460193" description="Serine/arginine-rich splicing factor x16">
    <location>
        <begin position="1"/>
        <end position="258"/>
    </location>
</feature>
<feature type="domain" description="RRM" evidence="2">
    <location>
        <begin position="8"/>
        <end position="81"/>
    </location>
</feature>
<feature type="zinc finger region" description="CCHC-type" evidence="1">
    <location>
        <begin position="116"/>
        <end position="132"/>
    </location>
</feature>
<feature type="region of interest" description="Disordered" evidence="3">
    <location>
        <begin position="81"/>
        <end position="113"/>
    </location>
</feature>
<feature type="region of interest" description="Disordered" evidence="3">
    <location>
        <begin position="130"/>
        <end position="258"/>
    </location>
</feature>
<feature type="compositionally biased region" description="Gly residues" evidence="3">
    <location>
        <begin position="86"/>
        <end position="103"/>
    </location>
</feature>
<feature type="compositionally biased region" description="Basic and acidic residues" evidence="3">
    <location>
        <begin position="104"/>
        <end position="113"/>
    </location>
</feature>
<feature type="compositionally biased region" description="Basic residues" evidence="3">
    <location>
        <begin position="130"/>
        <end position="141"/>
    </location>
</feature>
<feature type="compositionally biased region" description="Basic residues" evidence="3">
    <location>
        <begin position="149"/>
        <end position="166"/>
    </location>
</feature>
<feature type="compositionally biased region" description="Basic and acidic residues" evidence="3">
    <location>
        <begin position="180"/>
        <end position="197"/>
    </location>
</feature>
<feature type="compositionally biased region" description="Basic and acidic residues" evidence="3">
    <location>
        <begin position="210"/>
        <end position="221"/>
    </location>
</feature>
<feature type="compositionally biased region" description="Low complexity" evidence="3">
    <location>
        <begin position="231"/>
        <end position="240"/>
    </location>
</feature>
<feature type="compositionally biased region" description="Low complexity" evidence="3">
    <location>
        <begin position="249"/>
        <end position="258"/>
    </location>
</feature>
<feature type="splice variant" id="VSP_062270" description="In isoform B.">
    <location>
        <position position="138"/>
    </location>
</feature>
<sequence>MSRHPSDRKVYVGDLGNNARKNDLEYVFGAYGSLRSVWIARNPPGFAFVEFESARDAADAVRGLDGRTVCGRRARVELSTGKYARSGGGGGGGGGGGGGGGLGGRDRGGGGRGDDKCYECGGRGHFARHCRERKARQRRRSNSFSRSRSTSRRRRTRSKSGTRSRSRSAGSVGRRSGRSNGRDENGSASRYSDHERNGSGAVDSPPPPKRRYEDEDDDRVRGSPRSRSRSRSASPAVRRGSPPRRRGDSSASRSVSRD</sequence>
<gene>
    <name evidence="16" type="primary">x16</name>
    <name evidence="9" type="synonym">9G8</name>
    <name evidence="10 11" type="synonym">Dx16</name>
    <name evidence="8" type="synonym">dxl6</name>
    <name evidence="16" type="synonym">xl6</name>
    <name evidence="16" type="ORF">CG10203</name>
</gene>
<comment type="function">
    <text evidence="5 7">Serine/arginine-rich splicing factor (SR protein) involved in differential exon usage during RNA transcript processing, probably by binding exonic splicing enhancer elements and recruiting components of the splicing machinery (PubMed:17345156, PubMed:35780586). Binds RNA stem-loop structures with consensus sequence 5'-CCGUNUNKNW-3' (PubMed:17345156). Regulator of genes involved in lipid and carbohydrate metabolism, the immune response and the response to xenobiotics (PubMed:35780586).</text>
</comment>
<comment type="subunit">
    <text evidence="6">Interacts (via Arg/Ser-rich region) with Alsin2/CG7564, Rbp1 and Doa (via N-terminus).</text>
</comment>
<comment type="subcellular location">
    <subcellularLocation>
        <location evidence="5 6">Nucleus</location>
    </subcellularLocation>
</comment>
<comment type="alternative products">
    <event type="alternative splicing"/>
    <isoform>
        <id>Q9V3V0-1</id>
        <name evidence="16">A</name>
        <sequence type="displayed"/>
    </isoform>
    <isoform>
        <id>Q9V3V0-2</id>
        <name evidence="16">B</name>
        <sequence type="described" ref="VSP_062270"/>
    </isoform>
</comment>
<comment type="developmental stage">
    <text evidence="4 5 6">Expressed ubiquitously at early stages of embryogenesis (at protein level) (PubMed:17345156, PubMed:17828581). Highly expressed in the central nervous system and brain at later stages of embryogenesis (at protein level) (PubMed:17345156, PubMed:17828581). Weakly and ubiquitously expressed in larval eye and leg imaginal discs (at protein level) (PubMed:17345156). Maternal transcripts expressed in nurse cells during all stages of oogenesis and are detectable at high levels in eggs and embryos up to the gastrulation stage (PubMed:10640718). Expressed in the differentiating neuroectoderm of stage 11 embryos (PubMed:10640718). Almost exclusively expressed in brain and central nervous system during embryogenesis from stage 14 onwards (PubMed:10640718). Weakly and ubiquitously expressed in larval imaginal discs with high levels of expression in the ventral pouch, hinge and pleural region of the wing disc as well as the dorsal sector of the leg disc (PubMed:10640718).</text>
</comment>
<comment type="PTM">
    <text evidence="6">Highly phosphorylated (PubMed:17828581). May be phosphorylated by the serine/threonine-protein kinase Doa (PubMed:17828581).</text>
</comment>
<comment type="disruption phenotype">
    <text evidence="7">Conditional RNAi-mediated knockdown in female fat body results in altered expression and differential exon usage of genes involved in metabolism of lipids and carbohydrates, the immune response and the response to xenobiotics.</text>
</comment>
<keyword id="KW-0025">Alternative splicing</keyword>
<keyword id="KW-0479">Metal-binding</keyword>
<keyword id="KW-0507">mRNA processing</keyword>
<keyword id="KW-0508">mRNA splicing</keyword>
<keyword id="KW-0539">Nucleus</keyword>
<keyword id="KW-1185">Reference proteome</keyword>
<keyword id="KW-0694">RNA-binding</keyword>
<keyword id="KW-0862">Zinc</keyword>
<keyword id="KW-0863">Zinc-finger</keyword>
<proteinExistence type="evidence at protein level"/>
<dbReference type="EMBL" id="AJ249466">
    <property type="protein sequence ID" value="CAB60724.1"/>
    <property type="molecule type" value="mRNA"/>
</dbReference>
<dbReference type="EMBL" id="AE014134">
    <property type="protein sequence ID" value="AAF52454.1"/>
    <property type="molecule type" value="Genomic_DNA"/>
</dbReference>
<dbReference type="EMBL" id="AE014134">
    <property type="protein sequence ID" value="AGB92704.1"/>
    <property type="molecule type" value="Genomic_DNA"/>
</dbReference>
<dbReference type="EMBL" id="AF232774">
    <property type="protein sequence ID" value="AAF43414.1"/>
    <property type="molecule type" value="mRNA"/>
</dbReference>
<dbReference type="EMBL" id="AY095057">
    <property type="protein sequence ID" value="AAM11385.1"/>
    <property type="molecule type" value="mRNA"/>
</dbReference>
<dbReference type="RefSeq" id="NP_001260168.1">
    <molecule id="Q9V3V0-2"/>
    <property type="nucleotide sequence ID" value="NM_001273239.2"/>
</dbReference>
<dbReference type="RefSeq" id="NP_723226.1">
    <molecule id="Q9V3V0-1"/>
    <property type="nucleotide sequence ID" value="NM_164718.2"/>
</dbReference>
<dbReference type="SMR" id="Q9V3V0"/>
<dbReference type="FunCoup" id="Q9V3V0">
    <property type="interactions" value="1290"/>
</dbReference>
<dbReference type="IntAct" id="Q9V3V0">
    <property type="interactions" value="2"/>
</dbReference>
<dbReference type="STRING" id="7227.FBpp0078996"/>
<dbReference type="PaxDb" id="7227-FBpp0078996"/>
<dbReference type="DNASU" id="33967"/>
<dbReference type="EnsemblMetazoa" id="FBtr0079368">
    <molecule id="Q9V3V0-1"/>
    <property type="protein sequence ID" value="FBpp0078996"/>
    <property type="gene ID" value="FBgn0028554"/>
</dbReference>
<dbReference type="EnsemblMetazoa" id="FBtr0332328">
    <molecule id="Q9V3V0-2"/>
    <property type="protein sequence ID" value="FBpp0304606"/>
    <property type="gene ID" value="FBgn0028554"/>
</dbReference>
<dbReference type="GeneID" id="33967"/>
<dbReference type="KEGG" id="dme:Dmel_CG10203"/>
<dbReference type="UCSC" id="CG10203-RA">
    <molecule id="Q9V3V0-1"/>
    <property type="organism name" value="d. melanogaster"/>
</dbReference>
<dbReference type="AGR" id="FB:FBgn0028554"/>
<dbReference type="CTD" id="33967"/>
<dbReference type="FlyBase" id="FBgn0028554">
    <property type="gene designation" value="x16"/>
</dbReference>
<dbReference type="VEuPathDB" id="VectorBase:FBgn0028554"/>
<dbReference type="eggNOG" id="KOG0107">
    <property type="taxonomic scope" value="Eukaryota"/>
</dbReference>
<dbReference type="GeneTree" id="ENSGT00910000144115"/>
<dbReference type="HOGENOM" id="CLU_012062_20_0_1"/>
<dbReference type="OMA" id="CYECGMR"/>
<dbReference type="OrthoDB" id="5970at2759"/>
<dbReference type="Reactome" id="R-DME-159236">
    <property type="pathway name" value="Transport of Mature mRNA derived from an Intron-Containing Transcript"/>
</dbReference>
<dbReference type="Reactome" id="R-DME-72163">
    <property type="pathway name" value="mRNA Splicing - Major Pathway"/>
</dbReference>
<dbReference type="Reactome" id="R-DME-72165">
    <property type="pathway name" value="mRNA Splicing - Minor Pathway"/>
</dbReference>
<dbReference type="Reactome" id="R-DME-72187">
    <property type="pathway name" value="mRNA 3'-end processing"/>
</dbReference>
<dbReference type="Reactome" id="R-DME-72203">
    <property type="pathway name" value="Processing of Capped Intron-Containing Pre-mRNA"/>
</dbReference>
<dbReference type="Reactome" id="R-DME-73856">
    <property type="pathway name" value="RNA Polymerase II Transcription Termination"/>
</dbReference>
<dbReference type="BioGRID-ORCS" id="33967">
    <property type="hits" value="1 hit in 3 CRISPR screens"/>
</dbReference>
<dbReference type="GenomeRNAi" id="33967"/>
<dbReference type="Proteomes" id="UP000000803">
    <property type="component" value="Chromosome 2L"/>
</dbReference>
<dbReference type="Bgee" id="FBgn0028554">
    <property type="expression patterns" value="Expressed in cleaving embryo and 158 other cell types or tissues"/>
</dbReference>
<dbReference type="ExpressionAtlas" id="Q9V3V0">
    <property type="expression patterns" value="baseline and differential"/>
</dbReference>
<dbReference type="GO" id="GO:0071013">
    <property type="term" value="C:catalytic step 2 spliceosome"/>
    <property type="evidence" value="ECO:0007005"/>
    <property type="project" value="FlyBase"/>
</dbReference>
<dbReference type="GO" id="GO:0016607">
    <property type="term" value="C:nuclear speck"/>
    <property type="evidence" value="ECO:0000318"/>
    <property type="project" value="GO_Central"/>
</dbReference>
<dbReference type="GO" id="GO:0005634">
    <property type="term" value="C:nucleus"/>
    <property type="evidence" value="ECO:0000314"/>
    <property type="project" value="FlyBase"/>
</dbReference>
<dbReference type="GO" id="GO:0071011">
    <property type="term" value="C:precatalytic spliceosome"/>
    <property type="evidence" value="ECO:0007005"/>
    <property type="project" value="FlyBase"/>
</dbReference>
<dbReference type="GO" id="GO:0003729">
    <property type="term" value="F:mRNA binding"/>
    <property type="evidence" value="ECO:0000314"/>
    <property type="project" value="FlyBase"/>
</dbReference>
<dbReference type="GO" id="GO:0003723">
    <property type="term" value="F:RNA binding"/>
    <property type="evidence" value="ECO:0000255"/>
    <property type="project" value="FlyBase"/>
</dbReference>
<dbReference type="GO" id="GO:0008270">
    <property type="term" value="F:zinc ion binding"/>
    <property type="evidence" value="ECO:0007669"/>
    <property type="project" value="UniProtKB-KW"/>
</dbReference>
<dbReference type="GO" id="GO:0045292">
    <property type="term" value="P:mRNA cis splicing, via spliceosome"/>
    <property type="evidence" value="ECO:0000318"/>
    <property type="project" value="GO_Central"/>
</dbReference>
<dbReference type="GO" id="GO:0000398">
    <property type="term" value="P:mRNA splicing, via spliceosome"/>
    <property type="evidence" value="ECO:0000250"/>
    <property type="project" value="FlyBase"/>
</dbReference>
<dbReference type="GO" id="GO:0000381">
    <property type="term" value="P:regulation of alternative mRNA splicing, via spliceosome"/>
    <property type="evidence" value="ECO:0000315"/>
    <property type="project" value="FlyBase"/>
</dbReference>
<dbReference type="GO" id="GO:0010468">
    <property type="term" value="P:regulation of gene expression"/>
    <property type="evidence" value="ECO:0000315"/>
    <property type="project" value="FlyBase"/>
</dbReference>
<dbReference type="GO" id="GO:0031440">
    <property type="term" value="P:regulation of mRNA 3'-end processing"/>
    <property type="evidence" value="ECO:0000315"/>
    <property type="project" value="FlyBase"/>
</dbReference>
<dbReference type="GO" id="GO:0001178">
    <property type="term" value="P:regulation of transcriptional start site selection at RNA polymerase II promoter"/>
    <property type="evidence" value="ECO:0000315"/>
    <property type="project" value="FlyBase"/>
</dbReference>
<dbReference type="GO" id="GO:0008380">
    <property type="term" value="P:RNA splicing"/>
    <property type="evidence" value="ECO:0000353"/>
    <property type="project" value="FlyBase"/>
</dbReference>
<dbReference type="CDD" id="cd12373">
    <property type="entry name" value="RRM_SRSF3_like"/>
    <property type="match status" value="1"/>
</dbReference>
<dbReference type="FunFam" id="3.30.70.330:FF:000681">
    <property type="entry name" value="X16 splicing factor, isoform B"/>
    <property type="match status" value="1"/>
</dbReference>
<dbReference type="FunFam" id="4.10.60.10:FF:000061">
    <property type="entry name" value="X16 splicing factor, isoform B"/>
    <property type="match status" value="1"/>
</dbReference>
<dbReference type="Gene3D" id="3.30.70.330">
    <property type="match status" value="1"/>
</dbReference>
<dbReference type="Gene3D" id="4.10.60.10">
    <property type="entry name" value="Zinc finger, CCHC-type"/>
    <property type="match status" value="1"/>
</dbReference>
<dbReference type="InterPro" id="IPR012677">
    <property type="entry name" value="Nucleotide-bd_a/b_plait_sf"/>
</dbReference>
<dbReference type="InterPro" id="IPR035979">
    <property type="entry name" value="RBD_domain_sf"/>
</dbReference>
<dbReference type="InterPro" id="IPR000504">
    <property type="entry name" value="RRM_dom"/>
</dbReference>
<dbReference type="InterPro" id="IPR001878">
    <property type="entry name" value="Znf_CCHC"/>
</dbReference>
<dbReference type="InterPro" id="IPR036875">
    <property type="entry name" value="Znf_CCHC_sf"/>
</dbReference>
<dbReference type="PANTHER" id="PTHR48038">
    <property type="entry name" value="RIBONUCLEOPROTEIN RB97D"/>
    <property type="match status" value="1"/>
</dbReference>
<dbReference type="PANTHER" id="PTHR48038:SF3">
    <property type="entry name" value="SPLICING FACTOR, ARGININE_SERINE-RICH 1-RELATED"/>
    <property type="match status" value="1"/>
</dbReference>
<dbReference type="Pfam" id="PF00076">
    <property type="entry name" value="RRM_1"/>
    <property type="match status" value="1"/>
</dbReference>
<dbReference type="SMART" id="SM00360">
    <property type="entry name" value="RRM"/>
    <property type="match status" value="1"/>
</dbReference>
<dbReference type="SMART" id="SM00343">
    <property type="entry name" value="ZnF_C2HC"/>
    <property type="match status" value="1"/>
</dbReference>
<dbReference type="SUPFAM" id="SSF57756">
    <property type="entry name" value="Retrovirus zinc finger-like domains"/>
    <property type="match status" value="1"/>
</dbReference>
<dbReference type="SUPFAM" id="SSF54928">
    <property type="entry name" value="RNA-binding domain, RBD"/>
    <property type="match status" value="1"/>
</dbReference>
<dbReference type="PROSITE" id="PS50102">
    <property type="entry name" value="RRM"/>
    <property type="match status" value="1"/>
</dbReference>
<dbReference type="PROSITE" id="PS50158">
    <property type="entry name" value="ZF_CCHC"/>
    <property type="match status" value="1"/>
</dbReference>